<feature type="chain" id="PRO_0000312330" description="Talin-B">
    <location>
        <begin position="1"/>
        <end position="2614"/>
    </location>
</feature>
<feature type="domain" description="FERM" evidence="2">
    <location>
        <begin position="85"/>
        <end position="369"/>
    </location>
</feature>
<feature type="domain" description="I/LWEQ" evidence="3">
    <location>
        <begin position="2219"/>
        <end position="2460"/>
    </location>
</feature>
<feature type="domain" description="HP" evidence="4">
    <location>
        <begin position="2553"/>
        <end position="2614"/>
    </location>
</feature>
<feature type="region of interest" description="Disordered" evidence="5">
    <location>
        <begin position="393"/>
        <end position="421"/>
    </location>
</feature>
<feature type="region of interest" description="Disordered" evidence="5">
    <location>
        <begin position="2454"/>
        <end position="2557"/>
    </location>
</feature>
<feature type="coiled-coil region" evidence="1">
    <location>
        <begin position="1938"/>
        <end position="1965"/>
    </location>
</feature>
<feature type="coiled-coil region" evidence="1">
    <location>
        <begin position="2033"/>
        <end position="2057"/>
    </location>
</feature>
<feature type="compositionally biased region" description="Low complexity" evidence="5">
    <location>
        <begin position="395"/>
        <end position="406"/>
    </location>
</feature>
<feature type="compositionally biased region" description="Polar residues" evidence="5">
    <location>
        <begin position="2473"/>
        <end position="2487"/>
    </location>
</feature>
<feature type="compositionally biased region" description="Low complexity" evidence="5">
    <location>
        <begin position="2517"/>
        <end position="2537"/>
    </location>
</feature>
<feature type="compositionally biased region" description="Pro residues" evidence="5">
    <location>
        <begin position="2538"/>
        <end position="2548"/>
    </location>
</feature>
<feature type="sequence conflict" description="In Ref. 1; BAA75511." evidence="7" ref="1">
    <original>Q</original>
    <variation>P</variation>
    <location>
        <position position="1069"/>
    </location>
</feature>
<protein>
    <recommendedName>
        <fullName>Talin-B</fullName>
    </recommendedName>
</protein>
<name>TALB_DICDI</name>
<reference key="1">
    <citation type="journal article" date="1999" name="Curr. Biol.">
        <title>A unique talin homologue with a villin headpiece-like domain is required for multicellular morphogenesis in Dictyostelium.</title>
        <authorList>
            <person name="Tsujioka M."/>
            <person name="Machesky L.M."/>
            <person name="Cole S.L."/>
            <person name="Yahata K."/>
            <person name="Inouye K."/>
        </authorList>
    </citation>
    <scope>NUCLEOTIDE SEQUENCE [MRNA]</scope>
    <scope>FUNCTION</scope>
    <scope>DEVELOPMENTAL STAGE</scope>
    <source>
        <strain>AX2</strain>
    </source>
</reference>
<reference key="2">
    <citation type="journal article" date="2005" name="Nature">
        <title>The genome of the social amoeba Dictyostelium discoideum.</title>
        <authorList>
            <person name="Eichinger L."/>
            <person name="Pachebat J.A."/>
            <person name="Gloeckner G."/>
            <person name="Rajandream M.A."/>
            <person name="Sucgang R."/>
            <person name="Berriman M."/>
            <person name="Song J."/>
            <person name="Olsen R."/>
            <person name="Szafranski K."/>
            <person name="Xu Q."/>
            <person name="Tunggal B."/>
            <person name="Kummerfeld S."/>
            <person name="Madera M."/>
            <person name="Konfortov B.A."/>
            <person name="Rivero F."/>
            <person name="Bankier A.T."/>
            <person name="Lehmann R."/>
            <person name="Hamlin N."/>
            <person name="Davies R."/>
            <person name="Gaudet P."/>
            <person name="Fey P."/>
            <person name="Pilcher K."/>
            <person name="Chen G."/>
            <person name="Saunders D."/>
            <person name="Sodergren E.J."/>
            <person name="Davis P."/>
            <person name="Kerhornou A."/>
            <person name="Nie X."/>
            <person name="Hall N."/>
            <person name="Anjard C."/>
            <person name="Hemphill L."/>
            <person name="Bason N."/>
            <person name="Farbrother P."/>
            <person name="Desany B."/>
            <person name="Just E."/>
            <person name="Morio T."/>
            <person name="Rost R."/>
            <person name="Churcher C.M."/>
            <person name="Cooper J."/>
            <person name="Haydock S."/>
            <person name="van Driessche N."/>
            <person name="Cronin A."/>
            <person name="Goodhead I."/>
            <person name="Muzny D.M."/>
            <person name="Mourier T."/>
            <person name="Pain A."/>
            <person name="Lu M."/>
            <person name="Harper D."/>
            <person name="Lindsay R."/>
            <person name="Hauser H."/>
            <person name="James K.D."/>
            <person name="Quiles M."/>
            <person name="Madan Babu M."/>
            <person name="Saito T."/>
            <person name="Buchrieser C."/>
            <person name="Wardroper A."/>
            <person name="Felder M."/>
            <person name="Thangavelu M."/>
            <person name="Johnson D."/>
            <person name="Knights A."/>
            <person name="Loulseged H."/>
            <person name="Mungall K.L."/>
            <person name="Oliver K."/>
            <person name="Price C."/>
            <person name="Quail M.A."/>
            <person name="Urushihara H."/>
            <person name="Hernandez J."/>
            <person name="Rabbinowitsch E."/>
            <person name="Steffen D."/>
            <person name="Sanders M."/>
            <person name="Ma J."/>
            <person name="Kohara Y."/>
            <person name="Sharp S."/>
            <person name="Simmonds M.N."/>
            <person name="Spiegler S."/>
            <person name="Tivey A."/>
            <person name="Sugano S."/>
            <person name="White B."/>
            <person name="Walker D."/>
            <person name="Woodward J.R."/>
            <person name="Winckler T."/>
            <person name="Tanaka Y."/>
            <person name="Shaulsky G."/>
            <person name="Schleicher M."/>
            <person name="Weinstock G.M."/>
            <person name="Rosenthal A."/>
            <person name="Cox E.C."/>
            <person name="Chisholm R.L."/>
            <person name="Gibbs R.A."/>
            <person name="Loomis W.F."/>
            <person name="Platzer M."/>
            <person name="Kay R.R."/>
            <person name="Williams J.G."/>
            <person name="Dear P.H."/>
            <person name="Noegel A.A."/>
            <person name="Barrell B.G."/>
            <person name="Kuspa A."/>
        </authorList>
    </citation>
    <scope>NUCLEOTIDE SEQUENCE [LARGE SCALE GENOMIC DNA]</scope>
    <source>
        <strain>AX4</strain>
    </source>
</reference>
<proteinExistence type="evidence at transcript level"/>
<keyword id="KW-0009">Actin-binding</keyword>
<keyword id="KW-0175">Coiled coil</keyword>
<keyword id="KW-0963">Cytoplasm</keyword>
<keyword id="KW-0206">Cytoskeleton</keyword>
<keyword id="KW-1185">Reference proteome</keyword>
<dbReference type="EMBL" id="AB023655">
    <property type="protein sequence ID" value="BAA75511.1"/>
    <property type="molecule type" value="mRNA"/>
</dbReference>
<dbReference type="EMBL" id="AAFI02000102">
    <property type="protein sequence ID" value="EAL63652.1"/>
    <property type="molecule type" value="Genomic_DNA"/>
</dbReference>
<dbReference type="RefSeq" id="XP_637174.1">
    <property type="nucleotide sequence ID" value="XM_632082.1"/>
</dbReference>
<dbReference type="SMR" id="Q54K81"/>
<dbReference type="BioGRID" id="1251178">
    <property type="interactions" value="1"/>
</dbReference>
<dbReference type="FunCoup" id="Q54K81">
    <property type="interactions" value="46"/>
</dbReference>
<dbReference type="STRING" id="44689.Q54K81"/>
<dbReference type="GlyGen" id="Q54K81">
    <property type="glycosylation" value="1 site"/>
</dbReference>
<dbReference type="PaxDb" id="44689-DDB0191526"/>
<dbReference type="ABCD" id="Q54K81">
    <property type="antibodies" value="3 sequenced antibodies"/>
</dbReference>
<dbReference type="EnsemblProtists" id="EAL63652">
    <property type="protein sequence ID" value="EAL63652"/>
    <property type="gene ID" value="DDB_G0287505"/>
</dbReference>
<dbReference type="GeneID" id="8626175"/>
<dbReference type="KEGG" id="ddi:DDB_G0287505"/>
<dbReference type="dictyBase" id="DDB_G0287505">
    <property type="gene designation" value="talB"/>
</dbReference>
<dbReference type="VEuPathDB" id="AmoebaDB:DDB_G0287505"/>
<dbReference type="eggNOG" id="KOG0445">
    <property type="taxonomic scope" value="Eukaryota"/>
</dbReference>
<dbReference type="eggNOG" id="KOG4261">
    <property type="taxonomic scope" value="Eukaryota"/>
</dbReference>
<dbReference type="HOGENOM" id="CLU_000364_1_1_1"/>
<dbReference type="InParanoid" id="Q54K81"/>
<dbReference type="OMA" id="VDMTQHY"/>
<dbReference type="PhylomeDB" id="Q54K81"/>
<dbReference type="Reactome" id="R-DDI-114608">
    <property type="pathway name" value="Platelet degranulation"/>
</dbReference>
<dbReference type="PRO" id="PR:Q54K81"/>
<dbReference type="Proteomes" id="UP000002195">
    <property type="component" value="Chromosome 5"/>
</dbReference>
<dbReference type="GO" id="GO:0005938">
    <property type="term" value="C:cell cortex"/>
    <property type="evidence" value="ECO:0000314"/>
    <property type="project" value="dictyBase"/>
</dbReference>
<dbReference type="GO" id="GO:0031252">
    <property type="term" value="C:cell leading edge"/>
    <property type="evidence" value="ECO:0000314"/>
    <property type="project" value="dictyBase"/>
</dbReference>
<dbReference type="GO" id="GO:0005737">
    <property type="term" value="C:cytoplasm"/>
    <property type="evidence" value="ECO:0000314"/>
    <property type="project" value="dictyBase"/>
</dbReference>
<dbReference type="GO" id="GO:0005856">
    <property type="term" value="C:cytoskeleton"/>
    <property type="evidence" value="ECO:0007669"/>
    <property type="project" value="UniProtKB-SubCell"/>
</dbReference>
<dbReference type="GO" id="GO:0140220">
    <property type="term" value="C:pathogen-containing vacuole"/>
    <property type="evidence" value="ECO:0007005"/>
    <property type="project" value="dictyBase"/>
</dbReference>
<dbReference type="GO" id="GO:0005886">
    <property type="term" value="C:plasma membrane"/>
    <property type="evidence" value="ECO:0000318"/>
    <property type="project" value="GO_Central"/>
</dbReference>
<dbReference type="GO" id="GO:0031143">
    <property type="term" value="C:pseudopodium"/>
    <property type="evidence" value="ECO:0000314"/>
    <property type="project" value="dictyBase"/>
</dbReference>
<dbReference type="GO" id="GO:0051015">
    <property type="term" value="F:actin filament binding"/>
    <property type="evidence" value="ECO:0000314"/>
    <property type="project" value="dictyBase"/>
</dbReference>
<dbReference type="GO" id="GO:0005547">
    <property type="term" value="F:phosphatidylinositol-3,4,5-trisphosphate binding"/>
    <property type="evidence" value="ECO:0000314"/>
    <property type="project" value="dictyBase"/>
</dbReference>
<dbReference type="GO" id="GO:0051017">
    <property type="term" value="P:actin filament bundle assembly"/>
    <property type="evidence" value="ECO:0000314"/>
    <property type="project" value="dictyBase"/>
</dbReference>
<dbReference type="GO" id="GO:0048102">
    <property type="term" value="P:autophagic cell death"/>
    <property type="evidence" value="ECO:0000315"/>
    <property type="project" value="dictyBase"/>
</dbReference>
<dbReference type="GO" id="GO:0048870">
    <property type="term" value="P:cell motility"/>
    <property type="evidence" value="ECO:0000315"/>
    <property type="project" value="dictyBase"/>
</dbReference>
<dbReference type="GO" id="GO:0098609">
    <property type="term" value="P:cell-cell adhesion"/>
    <property type="evidence" value="ECO:0000318"/>
    <property type="project" value="GO_Central"/>
</dbReference>
<dbReference type="GO" id="GO:0031589">
    <property type="term" value="P:cell-substrate adhesion"/>
    <property type="evidence" value="ECO:0000316"/>
    <property type="project" value="dictyBase"/>
</dbReference>
<dbReference type="GO" id="GO:0040011">
    <property type="term" value="P:locomotion"/>
    <property type="evidence" value="ECO:0000315"/>
    <property type="project" value="dictyBase"/>
</dbReference>
<dbReference type="GO" id="GO:0030587">
    <property type="term" value="P:sorocarp development"/>
    <property type="evidence" value="ECO:0000315"/>
    <property type="project" value="dictyBase"/>
</dbReference>
<dbReference type="CDD" id="cd14473">
    <property type="entry name" value="FERM_B-lobe"/>
    <property type="match status" value="1"/>
</dbReference>
<dbReference type="CDD" id="cd10569">
    <property type="entry name" value="FERM_C_Talin"/>
    <property type="match status" value="1"/>
</dbReference>
<dbReference type="CDD" id="cd17089">
    <property type="entry name" value="FERM_F0_TLN"/>
    <property type="match status" value="1"/>
</dbReference>
<dbReference type="CDD" id="cd17090">
    <property type="entry name" value="FERM_F1_TLN"/>
    <property type="match status" value="1"/>
</dbReference>
<dbReference type="FunFam" id="1.20.1420.10:FF:000028">
    <property type="match status" value="1"/>
</dbReference>
<dbReference type="FunFam" id="1.20.1410.10:FF:000001">
    <property type="entry name" value="Talin 2"/>
    <property type="match status" value="1"/>
</dbReference>
<dbReference type="FunFam" id="1.20.80.10:FF:000007">
    <property type="entry name" value="Talin 2"/>
    <property type="match status" value="1"/>
</dbReference>
<dbReference type="FunFam" id="2.30.29.30:FF:000028">
    <property type="entry name" value="Talin 2"/>
    <property type="match status" value="1"/>
</dbReference>
<dbReference type="Gene3D" id="1.20.80.10">
    <property type="match status" value="1"/>
</dbReference>
<dbReference type="Gene3D" id="1.20.120.230">
    <property type="entry name" value="Alpha-catenin/vinculin-like"/>
    <property type="match status" value="4"/>
</dbReference>
<dbReference type="Gene3D" id="1.20.1410.10">
    <property type="entry name" value="I/LWEQ domain"/>
    <property type="match status" value="1"/>
</dbReference>
<dbReference type="Gene3D" id="3.10.20.90">
    <property type="entry name" value="Phosphatidylinositol 3-kinase Catalytic Subunit, Chain A, domain 1"/>
    <property type="match status" value="2"/>
</dbReference>
<dbReference type="Gene3D" id="2.30.29.30">
    <property type="entry name" value="Pleckstrin-homology domain (PH domain)/Phosphotyrosine-binding domain (PTB)"/>
    <property type="match status" value="1"/>
</dbReference>
<dbReference type="Gene3D" id="1.20.1420.10">
    <property type="entry name" value="Talin, central domain"/>
    <property type="match status" value="8"/>
</dbReference>
<dbReference type="Gene3D" id="1.10.950.10">
    <property type="entry name" value="Villin headpiece domain"/>
    <property type="match status" value="1"/>
</dbReference>
<dbReference type="InterPro" id="IPR036723">
    <property type="entry name" value="Alpha-catenin/vinculin-like_sf"/>
</dbReference>
<dbReference type="InterPro" id="IPR019749">
    <property type="entry name" value="Band_41_domain"/>
</dbReference>
<dbReference type="InterPro" id="IPR014352">
    <property type="entry name" value="FERM/acyl-CoA-bd_prot_sf"/>
</dbReference>
<dbReference type="InterPro" id="IPR035963">
    <property type="entry name" value="FERM_2"/>
</dbReference>
<dbReference type="InterPro" id="IPR019748">
    <property type="entry name" value="FERM_central"/>
</dbReference>
<dbReference type="InterPro" id="IPR019747">
    <property type="entry name" value="FERM_CS"/>
</dbReference>
<dbReference type="InterPro" id="IPR000299">
    <property type="entry name" value="FERM_domain"/>
</dbReference>
<dbReference type="InterPro" id="IPR032425">
    <property type="entry name" value="FERM_f0"/>
</dbReference>
<dbReference type="InterPro" id="IPR018979">
    <property type="entry name" value="FERM_N"/>
</dbReference>
<dbReference type="InterPro" id="IPR035964">
    <property type="entry name" value="I/LWEQ_dom_sf"/>
</dbReference>
<dbReference type="InterPro" id="IPR002558">
    <property type="entry name" value="ILWEQ_dom"/>
</dbReference>
<dbReference type="InterPro" id="IPR002404">
    <property type="entry name" value="IRS_PTB"/>
</dbReference>
<dbReference type="InterPro" id="IPR011993">
    <property type="entry name" value="PH-like_dom_sf"/>
</dbReference>
<dbReference type="InterPro" id="IPR054082">
    <property type="entry name" value="Talin_IBS2B"/>
</dbReference>
<dbReference type="InterPro" id="IPR049108">
    <property type="entry name" value="Talin_R4"/>
</dbReference>
<dbReference type="InterPro" id="IPR054060">
    <property type="entry name" value="TLN1-like_RS"/>
</dbReference>
<dbReference type="InterPro" id="IPR029071">
    <property type="entry name" value="Ubiquitin-like_domsf"/>
</dbReference>
<dbReference type="InterPro" id="IPR003128">
    <property type="entry name" value="Villin_headpiece"/>
</dbReference>
<dbReference type="InterPro" id="IPR036886">
    <property type="entry name" value="Villin_headpiece_dom_sf"/>
</dbReference>
<dbReference type="PANTHER" id="PTHR19981:SF1">
    <property type="entry name" value="RHEA, ISOFORM B"/>
    <property type="match status" value="1"/>
</dbReference>
<dbReference type="PANTHER" id="PTHR19981">
    <property type="entry name" value="TALIN"/>
    <property type="match status" value="1"/>
</dbReference>
<dbReference type="Pfam" id="PF16511">
    <property type="entry name" value="FERM_f0"/>
    <property type="match status" value="1"/>
</dbReference>
<dbReference type="Pfam" id="PF00373">
    <property type="entry name" value="FERM_M"/>
    <property type="match status" value="1"/>
</dbReference>
<dbReference type="Pfam" id="PF09379">
    <property type="entry name" value="FERM_N"/>
    <property type="match status" value="1"/>
</dbReference>
<dbReference type="Pfam" id="PF01608">
    <property type="entry name" value="I_LWEQ"/>
    <property type="match status" value="1"/>
</dbReference>
<dbReference type="Pfam" id="PF02174">
    <property type="entry name" value="IRS"/>
    <property type="match status" value="1"/>
</dbReference>
<dbReference type="Pfam" id="PF21896">
    <property type="entry name" value="Talin_IBS2B"/>
    <property type="match status" value="5"/>
</dbReference>
<dbReference type="Pfam" id="PF21692">
    <property type="entry name" value="Talin_R4"/>
    <property type="match status" value="1"/>
</dbReference>
<dbReference type="Pfam" id="PF21865">
    <property type="entry name" value="TLN1-like_RS"/>
    <property type="match status" value="2"/>
</dbReference>
<dbReference type="Pfam" id="PF02209">
    <property type="entry name" value="VHP"/>
    <property type="match status" value="1"/>
</dbReference>
<dbReference type="SMART" id="SM00295">
    <property type="entry name" value="B41"/>
    <property type="match status" value="1"/>
</dbReference>
<dbReference type="SMART" id="SM00307">
    <property type="entry name" value="ILWEQ"/>
    <property type="match status" value="1"/>
</dbReference>
<dbReference type="SMART" id="SM01244">
    <property type="entry name" value="IRS"/>
    <property type="match status" value="1"/>
</dbReference>
<dbReference type="SMART" id="SM00153">
    <property type="entry name" value="VHP"/>
    <property type="match status" value="1"/>
</dbReference>
<dbReference type="SUPFAM" id="SSF47220">
    <property type="entry name" value="alpha-catenin/vinculin-like"/>
    <property type="match status" value="5"/>
</dbReference>
<dbReference type="SUPFAM" id="SSF109885">
    <property type="entry name" value="I/LWEQ domain"/>
    <property type="match status" value="4"/>
</dbReference>
<dbReference type="SUPFAM" id="SSF50729">
    <property type="entry name" value="PH domain-like"/>
    <property type="match status" value="1"/>
</dbReference>
<dbReference type="SUPFAM" id="SSF47031">
    <property type="entry name" value="Second domain of FERM"/>
    <property type="match status" value="1"/>
</dbReference>
<dbReference type="SUPFAM" id="SSF54236">
    <property type="entry name" value="Ubiquitin-like"/>
    <property type="match status" value="1"/>
</dbReference>
<dbReference type="SUPFAM" id="SSF47050">
    <property type="entry name" value="VHP, Villin headpiece domain"/>
    <property type="match status" value="1"/>
</dbReference>
<dbReference type="PROSITE" id="PS00660">
    <property type="entry name" value="FERM_1"/>
    <property type="match status" value="1"/>
</dbReference>
<dbReference type="PROSITE" id="PS50057">
    <property type="entry name" value="FERM_3"/>
    <property type="match status" value="1"/>
</dbReference>
<dbReference type="PROSITE" id="PS51089">
    <property type="entry name" value="HP"/>
    <property type="match status" value="1"/>
</dbReference>
<dbReference type="PROSITE" id="PS50945">
    <property type="entry name" value="I_LWEQ"/>
    <property type="match status" value="1"/>
</dbReference>
<accession>Q54K81</accession>
<accession>O97054</accession>
<sequence length="2614" mass="277729">MSLTLKIQIVRDKQVKAMKFSPTQTVAEVCAQVREKINETSGDDHGLFQPGIDAKRPSRWLKMDKTLQFYDLKINDELDYKKKHRPLKVRLMDETVKTMLVDDSLTAGEILEIIGKRIGIKNYEEFSLQTEGAAAGEWINHAQPLHEQGVPDDAVVLLKKKFFVDDFNVNRDDPIQLHLVYVQSRDAIISGSHPCSYEEAVQFGALQCQIQLGNHNPNLHKPGYLKIKEYFPPSFHKKKDAEKDIYKEFRKLTGMSESNSKFRYVQLCRSLKTYGITFFLTKERVKGQKKPVPKLLGITRDSILRLDAETKEVEHEYPLNHLRRWAASPQSFTLDFGDYEDDYVSVITTEGEAISQLLSGYIEILMKKRKDTGTVIDENETDIANVESVGRIRGQTSQATTSSSLSGYDGNGGREGQYSAPGQAIGYRGGLGGPLSIKVTNIDSASAAVANLLNEMELDPNAVIGQKSSLTPQQWRQQLAIHAKAVAAAAGKLLGNLNNPNGMDKNQMDSNARDVALTIDQLVHAARAASIASGEDPDGEMPLFDGAKAVAESISKLLKATKDLSSNPNDENARNLIAQAADQLKLMTSYLDGACNGVITDSGTLRLLMEAGKAIAIATQDLVNQANVAIQDINDPIRKNQLNMAIDETMKAGIHASAVSQALAATILDPNCRQQFNTAAKTAQDTNNYLLSAAKAAQMDPALLEKLRASAKSIAEAYASLIQSADLAQPKSGDDVEFTSASKTILSAAAQLLGSQGKSDNIMQQAKVIEEAMGHLIAGARRAALKTDDPGVRDRLIQCSKAVAEAVRNLMEIAQDSADNPEDKVLFAKLQESSKRVATAVKQLVGDAGKESAFQLLRTNAKLACAATTGLMNTSRQSMLQGHLSDQESNKLLLACVQAGPAITNLLNSITSSQKAPNDLPAQNQLIEVARVSAPIAYQVVAVAKGAIPHFTDQHSKQEVSNSSNTASDAIRALLDAIGDLTSAVGQQEFDDALDTVQALEADMESSTMLVQAGTTHQIPGQTRENALELLNVAARALGSSAKQVLLQYKTSPEKLGETSKDLATSVSQVTNAAKSVCFTTQNRSVQKAVLGAAKQITTESTNLVSCARAVSSNPGDPSLESALQSSVKAIAEALANLLTTSKGGDPGGKDLDDAIEAIKNDTKRINNPPVNLGGEGGVNSEKAISSSKALVGAVSQVAANARSNPSALGASARTTSTTFTLLVDTINLCTGTIVNKQLAIEIVKGGQLLGIETIKLLQASRFAASRPGEGEGELNQTQQSVSNTVKQLIYNIQSSVPGQAEIADALEIVKQAIIALNSSESSGSRPNALESLTQAAKNLADYTAQVVQSKGNSEKMGTQCKSASESLKDVVEYTKASLSTAEGHPDSIKTLASKVDDSSNALFNSCKKTGQLSDQDKKNAALDAKNLALSVPNLMGAAKKISASLVQSNPEKSKDILLVAQNITIATSKLVNIAKSVASGQSQADVSQLAATKKEVSELISKLLNATNGHDQDATTISIDLDSLSKSEQALLDASRSTANYMSQFMAIGKTISTGTKDPNVHQQFSGAAQNVSSGVQQLLSAINGMKPEQKDLDESIEIIQNAVVDLDSATLNAAIGLLENTAPVGKTAQVCQEELVDISRELATSMKTFLAAPKQDPTNLGQSAKDTANILPKIVNISKQLASLTTNPDIKQTQLLLSKKLADNMLELMISAKSGDVSDSKQAFNASQSIADILTSVKGGVMQSRDCDESIQIIGKSKENLQKPANDTHGKTYQQYRDEMTEIAKQLALGVSQLANSAKSKPEEIGSSSLKIASIIPRLAETARSTAAATNDVAAKKKLIDSTTGIIDATSNIISDAKLASADHKNTQLQQKISNNFKDITTQIANLIAALRAGATADRDIENACNEVNHVTTDLDAASLFAAAGQIDIDTDGHTTQNIQEQVGKLAQDLKDSKNQLAEASGKTIEDVGTSAKATASINQKLAHATKVCAALTSDSTTQQNLLSAARTVSSNLQQTISASKNAQKNPNAGNKAILDKSSQELEESIDSLANLVQSSTTTKGISELEGVSSEIRKQLAAYDSATANVNANATAEDVVNSAKNLAESIAYLVSSCNNSPEDIAEASKGTTLAIKSLLANAKGASVLTDDAVIQQNVTESAKAAAQTVLKLIQAAKQQRNDPSNPAHQNKLSEISSEVVESISTCVNAAEDLPEGKRAKLLFAAGESLEETAEKELKAAAAIIEEATAALLNAKKKREQNRIASGIDEAGIDESILEAARAITSATGVLVQCATNVQHELVLAGKVGNKGNMYRRDPTWARGLISAAQAVAGSVQGLVHSANSSSQGKVDEEQLVASAKGVAAATARLVTASRAKADLNSASNSQLAQAAKQVSNATAALVEAAKQVNEEPEVEFDTTNLSNAQIISKEMDQQIQILKLKKELEQAEKKLFSIRKKEYSDQTGNPSPAKDSDNKPTTSISVGITPTKRTTQASPPSPPLTPTQQAAGTPTLPPRPLMKKPAPSQAPSSPVAPVSAPVSKPSPKPAPKPAAPTAAAPNKTYTLEELKKKPANIDHSNLEIYLSDEEFKAVFNCERSELAAMPTWKRNNIKTKLGLF</sequence>
<gene>
    <name type="primary">talB</name>
    <name type="ORF">DDB_G0287505</name>
</gene>
<organism>
    <name type="scientific">Dictyostelium discoideum</name>
    <name type="common">Social amoeba</name>
    <dbReference type="NCBI Taxonomy" id="44689"/>
    <lineage>
        <taxon>Eukaryota</taxon>
        <taxon>Amoebozoa</taxon>
        <taxon>Evosea</taxon>
        <taxon>Eumycetozoa</taxon>
        <taxon>Dictyostelia</taxon>
        <taxon>Dictyosteliales</taxon>
        <taxon>Dictyosteliaceae</taxon>
        <taxon>Dictyostelium</taxon>
    </lineage>
</organism>
<comment type="function">
    <text evidence="6">Actin-binding protein required for multicellular morphogenesis. Substrate of pkgB and/or pkbA.</text>
</comment>
<comment type="subcellular location">
    <subcellularLocation>
        <location evidence="7">Cytoplasm</location>
        <location evidence="7">Cytoskeleton</location>
    </subcellularLocation>
    <subcellularLocation>
        <location evidence="7">Cytoplasm</location>
        <location evidence="7">Cell cortex</location>
    </subcellularLocation>
</comment>
<comment type="developmental stage">
    <text evidence="6">Expressed during growth and throughout development. The expression level is developmentally regulated. It reaches a maximum at the monut stage.</text>
</comment>
<evidence type="ECO:0000255" key="1"/>
<evidence type="ECO:0000255" key="2">
    <source>
        <dbReference type="PROSITE-ProRule" id="PRU00084"/>
    </source>
</evidence>
<evidence type="ECO:0000255" key="3">
    <source>
        <dbReference type="PROSITE-ProRule" id="PRU00292"/>
    </source>
</evidence>
<evidence type="ECO:0000255" key="4">
    <source>
        <dbReference type="PROSITE-ProRule" id="PRU00595"/>
    </source>
</evidence>
<evidence type="ECO:0000256" key="5">
    <source>
        <dbReference type="SAM" id="MobiDB-lite"/>
    </source>
</evidence>
<evidence type="ECO:0000269" key="6">
    <source>
    </source>
</evidence>
<evidence type="ECO:0000305" key="7"/>